<protein>
    <recommendedName>
        <fullName evidence="1">Ribonuclease VapC47</fullName>
        <shortName evidence="1">RNase VapC47</shortName>
        <ecNumber evidence="1">3.1.-.-</ecNumber>
    </recommendedName>
    <alternativeName>
        <fullName evidence="1">Toxin VapC47</fullName>
    </alternativeName>
</protein>
<reference key="1">
    <citation type="journal article" date="2002" name="J. Bacteriol.">
        <title>Whole-genome comparison of Mycobacterium tuberculosis clinical and laboratory strains.</title>
        <authorList>
            <person name="Fleischmann R.D."/>
            <person name="Alland D."/>
            <person name="Eisen J.A."/>
            <person name="Carpenter L."/>
            <person name="White O."/>
            <person name="Peterson J.D."/>
            <person name="DeBoy R.T."/>
            <person name="Dodson R.J."/>
            <person name="Gwinn M.L."/>
            <person name="Haft D.H."/>
            <person name="Hickey E.K."/>
            <person name="Kolonay J.F."/>
            <person name="Nelson W.C."/>
            <person name="Umayam L.A."/>
            <person name="Ermolaeva M.D."/>
            <person name="Salzberg S.L."/>
            <person name="Delcher A."/>
            <person name="Utterback T.R."/>
            <person name="Weidman J.F."/>
            <person name="Khouri H.M."/>
            <person name="Gill J."/>
            <person name="Mikula A."/>
            <person name="Bishai W."/>
            <person name="Jacobs W.R. Jr."/>
            <person name="Venter J.C."/>
            <person name="Fraser C.M."/>
        </authorList>
    </citation>
    <scope>NUCLEOTIDE SEQUENCE [LARGE SCALE GENOMIC DNA]</scope>
    <source>
        <strain>CDC 1551 / Oshkosh</strain>
    </source>
</reference>
<evidence type="ECO:0000255" key="1">
    <source>
        <dbReference type="HAMAP-Rule" id="MF_00265"/>
    </source>
</evidence>
<evidence type="ECO:0000305" key="2"/>
<keyword id="KW-0378">Hydrolase</keyword>
<keyword id="KW-0460">Magnesium</keyword>
<keyword id="KW-0479">Metal-binding</keyword>
<keyword id="KW-0540">Nuclease</keyword>
<keyword id="KW-1185">Reference proteome</keyword>
<keyword id="KW-1277">Toxin-antitoxin system</keyword>
<name>VPC47_MYCTO</name>
<sequence length="136" mass="14728">MIYMDTSALTKLLISEPETTELRTWLTAQSGQGEDAATSTLGRVELMRVVARYGQPGQTERARYLLDGLDILPLTEPVIGLAETIGPATLRSLDAIHLAAAAQIKRELTAFVTYDHRLLSGCREVGFVTASPGAVR</sequence>
<accession>P9WF48</accession>
<accession>L0TFI7</accession>
<accession>Q50717</accession>
<organism>
    <name type="scientific">Mycobacterium tuberculosis (strain CDC 1551 / Oshkosh)</name>
    <dbReference type="NCBI Taxonomy" id="83331"/>
    <lineage>
        <taxon>Bacteria</taxon>
        <taxon>Bacillati</taxon>
        <taxon>Actinomycetota</taxon>
        <taxon>Actinomycetes</taxon>
        <taxon>Mycobacteriales</taxon>
        <taxon>Mycobacteriaceae</taxon>
        <taxon>Mycobacterium</taxon>
        <taxon>Mycobacterium tuberculosis complex</taxon>
    </lineage>
</organism>
<comment type="function">
    <text evidence="1">Toxic component of a type II toxin-antitoxin (TA) system. An RNase. Its toxic effect on colony formation is neutralized by coexpression with cognate antitoxin VapB47 (By similarity).</text>
</comment>
<comment type="cofactor">
    <cofactor evidence="1">
        <name>Mg(2+)</name>
        <dbReference type="ChEBI" id="CHEBI:18420"/>
    </cofactor>
</comment>
<comment type="similarity">
    <text evidence="1">Belongs to the PINc/VapC protein family.</text>
</comment>
<comment type="sequence caution" evidence="2">
    <conflict type="erroneous initiation">
        <sequence resource="EMBL-CDS" id="AAK47854"/>
    </conflict>
    <text>Truncated N-terminus.</text>
</comment>
<proteinExistence type="inferred from homology"/>
<feature type="chain" id="PRO_0000428601" description="Ribonuclease VapC47">
    <location>
        <begin position="1"/>
        <end position="136"/>
    </location>
</feature>
<feature type="domain" description="PINc" evidence="1">
    <location>
        <begin position="2"/>
        <end position="104"/>
    </location>
</feature>
<feature type="binding site" evidence="1">
    <location>
        <position position="5"/>
    </location>
    <ligand>
        <name>Mg(2+)</name>
        <dbReference type="ChEBI" id="CHEBI:18420"/>
    </ligand>
</feature>
<feature type="binding site" evidence="1">
    <location>
        <position position="94"/>
    </location>
    <ligand>
        <name>Mg(2+)</name>
        <dbReference type="ChEBI" id="CHEBI:18420"/>
    </ligand>
</feature>
<gene>
    <name evidence="1" type="primary">vapC47</name>
    <name type="ordered locus">MT3516</name>
</gene>
<dbReference type="EC" id="3.1.-.-" evidence="1"/>
<dbReference type="EMBL" id="AE000516">
    <property type="protein sequence ID" value="AAK47854.1"/>
    <property type="status" value="ALT_INIT"/>
    <property type="molecule type" value="Genomic_DNA"/>
</dbReference>
<dbReference type="PIR" id="E70736">
    <property type="entry name" value="E70736"/>
</dbReference>
<dbReference type="RefSeq" id="WP_003417998.1">
    <property type="nucleotide sequence ID" value="NZ_KK341227.1"/>
</dbReference>
<dbReference type="SMR" id="P9WF48"/>
<dbReference type="KEGG" id="mtc:MT3516"/>
<dbReference type="PATRIC" id="fig|83331.31.peg.3774"/>
<dbReference type="HOGENOM" id="CLU_119496_0_0_11"/>
<dbReference type="Proteomes" id="UP000001020">
    <property type="component" value="Chromosome"/>
</dbReference>
<dbReference type="GO" id="GO:0000287">
    <property type="term" value="F:magnesium ion binding"/>
    <property type="evidence" value="ECO:0007669"/>
    <property type="project" value="UniProtKB-UniRule"/>
</dbReference>
<dbReference type="GO" id="GO:0004540">
    <property type="term" value="F:RNA nuclease activity"/>
    <property type="evidence" value="ECO:0007669"/>
    <property type="project" value="InterPro"/>
</dbReference>
<dbReference type="CDD" id="cd09874">
    <property type="entry name" value="PIN_MT3492-like"/>
    <property type="match status" value="1"/>
</dbReference>
<dbReference type="FunFam" id="3.40.50.1010:FF:000083">
    <property type="entry name" value="Ribonuclease VapC"/>
    <property type="match status" value="1"/>
</dbReference>
<dbReference type="Gene3D" id="3.40.50.1010">
    <property type="entry name" value="5'-nuclease"/>
    <property type="match status" value="1"/>
</dbReference>
<dbReference type="HAMAP" id="MF_00265">
    <property type="entry name" value="VapC_Nob1"/>
    <property type="match status" value="1"/>
</dbReference>
<dbReference type="InterPro" id="IPR029060">
    <property type="entry name" value="PIN-like_dom_sf"/>
</dbReference>
<dbReference type="InterPro" id="IPR002716">
    <property type="entry name" value="PIN_dom"/>
</dbReference>
<dbReference type="InterPro" id="IPR022907">
    <property type="entry name" value="VapC_family"/>
</dbReference>
<dbReference type="Pfam" id="PF01850">
    <property type="entry name" value="PIN"/>
    <property type="match status" value="1"/>
</dbReference>
<dbReference type="SUPFAM" id="SSF88723">
    <property type="entry name" value="PIN domain-like"/>
    <property type="match status" value="1"/>
</dbReference>